<protein>
    <recommendedName>
        <fullName evidence="3">Small ribosomal subunit protein uS17c</fullName>
    </recommendedName>
    <alternativeName>
        <fullName>30S ribosomal protein S17, chloroplastic</fullName>
    </alternativeName>
    <alternativeName>
        <fullName>CS17</fullName>
    </alternativeName>
</protein>
<keyword id="KW-0150">Chloroplast</keyword>
<keyword id="KW-0934">Plastid</keyword>
<keyword id="KW-0687">Ribonucleoprotein</keyword>
<keyword id="KW-0689">Ribosomal protein</keyword>
<keyword id="KW-0694">RNA-binding</keyword>
<keyword id="KW-0699">rRNA-binding</keyword>
<keyword id="KW-0809">Transit peptide</keyword>
<dbReference type="EMBL" id="M31025">
    <property type="protein sequence ID" value="AAA33658.1"/>
    <property type="molecule type" value="mRNA"/>
</dbReference>
<dbReference type="PIR" id="B35542">
    <property type="entry name" value="B35542"/>
</dbReference>
<dbReference type="SMR" id="P17092"/>
<dbReference type="GO" id="GO:0009507">
    <property type="term" value="C:chloroplast"/>
    <property type="evidence" value="ECO:0007669"/>
    <property type="project" value="UniProtKB-SubCell"/>
</dbReference>
<dbReference type="GO" id="GO:1990904">
    <property type="term" value="C:ribonucleoprotein complex"/>
    <property type="evidence" value="ECO:0007669"/>
    <property type="project" value="UniProtKB-KW"/>
</dbReference>
<dbReference type="GO" id="GO:0005840">
    <property type="term" value="C:ribosome"/>
    <property type="evidence" value="ECO:0007669"/>
    <property type="project" value="UniProtKB-KW"/>
</dbReference>
<dbReference type="GO" id="GO:0019843">
    <property type="term" value="F:rRNA binding"/>
    <property type="evidence" value="ECO:0007669"/>
    <property type="project" value="UniProtKB-KW"/>
</dbReference>
<dbReference type="GO" id="GO:0003735">
    <property type="term" value="F:structural constituent of ribosome"/>
    <property type="evidence" value="ECO:0007669"/>
    <property type="project" value="InterPro"/>
</dbReference>
<dbReference type="GO" id="GO:0006412">
    <property type="term" value="P:translation"/>
    <property type="evidence" value="ECO:0007669"/>
    <property type="project" value="InterPro"/>
</dbReference>
<dbReference type="CDD" id="cd00364">
    <property type="entry name" value="Ribosomal_uS17"/>
    <property type="match status" value="1"/>
</dbReference>
<dbReference type="Gene3D" id="2.40.50.140">
    <property type="entry name" value="Nucleic acid-binding proteins"/>
    <property type="match status" value="1"/>
</dbReference>
<dbReference type="HAMAP" id="MF_01345_B">
    <property type="entry name" value="Ribosomal_uS17_B"/>
    <property type="match status" value="1"/>
</dbReference>
<dbReference type="InterPro" id="IPR012340">
    <property type="entry name" value="NA-bd_OB-fold"/>
</dbReference>
<dbReference type="InterPro" id="IPR000266">
    <property type="entry name" value="Ribosomal_uS17"/>
</dbReference>
<dbReference type="InterPro" id="IPR019984">
    <property type="entry name" value="Ribosomal_uS17_bact/chlr"/>
</dbReference>
<dbReference type="InterPro" id="IPR019979">
    <property type="entry name" value="Ribosomal_uS17_CS"/>
</dbReference>
<dbReference type="NCBIfam" id="NF004123">
    <property type="entry name" value="PRK05610.1"/>
    <property type="match status" value="1"/>
</dbReference>
<dbReference type="PANTHER" id="PTHR10744">
    <property type="entry name" value="40S RIBOSOMAL PROTEIN S11 FAMILY MEMBER"/>
    <property type="match status" value="1"/>
</dbReference>
<dbReference type="PANTHER" id="PTHR10744:SF7">
    <property type="entry name" value="SMALL RIBOSOMAL SUBUNIT PROTEIN US17C"/>
    <property type="match status" value="1"/>
</dbReference>
<dbReference type="Pfam" id="PF00366">
    <property type="entry name" value="Ribosomal_S17"/>
    <property type="match status" value="1"/>
</dbReference>
<dbReference type="PRINTS" id="PR00973">
    <property type="entry name" value="RIBOSOMALS17"/>
</dbReference>
<dbReference type="SUPFAM" id="SSF50249">
    <property type="entry name" value="Nucleic acid-binding proteins"/>
    <property type="match status" value="1"/>
</dbReference>
<dbReference type="PROSITE" id="PS00056">
    <property type="entry name" value="RIBOSOMAL_S17"/>
    <property type="match status" value="1"/>
</dbReference>
<reference key="1">
    <citation type="journal article" date="1990" name="J. Biol. Chem.">
        <title>Plant cytosolic ribosomal protein S11 and chloroplast ribosomal protein CS17. Their primary structures and evolutionary relationships.</title>
        <authorList>
            <person name="Gantt J.S."/>
            <person name="Thompson M.D."/>
        </authorList>
    </citation>
    <scope>NUCLEOTIDE SEQUENCE [MRNA]</scope>
</reference>
<sequence length="134" mass="14821">HHFFTGNGIGLNRFSNPISSPQTQTQTRSLPFPAIKAMKTMEGKVVCASGNKTVAVEVTRLAPHPKYQKRIRLKKKYQAHDPENDFKVGDIVQLLKTRPISKKKTFLAVPAPSRKSKKAGSSGELGIPLQSQQE</sequence>
<name>RR17_PEA</name>
<evidence type="ECO:0000250" key="1"/>
<evidence type="ECO:0000256" key="2">
    <source>
        <dbReference type="SAM" id="MobiDB-lite"/>
    </source>
</evidence>
<evidence type="ECO:0000305" key="3"/>
<feature type="transit peptide" description="Chloroplast" evidence="1">
    <location>
        <begin position="1" status="less than"/>
        <end position="37"/>
    </location>
</feature>
<feature type="chain" id="PRO_0000030622" description="Small ribosomal subunit protein uS17c">
    <location>
        <begin position="38"/>
        <end position="134"/>
    </location>
</feature>
<feature type="region of interest" description="Disordered" evidence="2">
    <location>
        <begin position="106"/>
        <end position="134"/>
    </location>
</feature>
<feature type="non-terminal residue">
    <location>
        <position position="1"/>
    </location>
</feature>
<proteinExistence type="evidence at transcript level"/>
<organism>
    <name type="scientific">Pisum sativum</name>
    <name type="common">Garden pea</name>
    <name type="synonym">Lathyrus oleraceus</name>
    <dbReference type="NCBI Taxonomy" id="3888"/>
    <lineage>
        <taxon>Eukaryota</taxon>
        <taxon>Viridiplantae</taxon>
        <taxon>Streptophyta</taxon>
        <taxon>Embryophyta</taxon>
        <taxon>Tracheophyta</taxon>
        <taxon>Spermatophyta</taxon>
        <taxon>Magnoliopsida</taxon>
        <taxon>eudicotyledons</taxon>
        <taxon>Gunneridae</taxon>
        <taxon>Pentapetalae</taxon>
        <taxon>rosids</taxon>
        <taxon>fabids</taxon>
        <taxon>Fabales</taxon>
        <taxon>Fabaceae</taxon>
        <taxon>Papilionoideae</taxon>
        <taxon>50 kb inversion clade</taxon>
        <taxon>NPAAA clade</taxon>
        <taxon>Hologalegina</taxon>
        <taxon>IRL clade</taxon>
        <taxon>Fabeae</taxon>
        <taxon>Pisum</taxon>
    </lineage>
</organism>
<comment type="function">
    <text evidence="1">One of the primary rRNA binding proteins, it binds specifically to the 5'-end of 16S ribosomal RNA.</text>
</comment>
<comment type="subunit">
    <text>Part of the 30S ribosomal subunit.</text>
</comment>
<comment type="subcellular location">
    <subcellularLocation>
        <location evidence="3">Plastid</location>
        <location evidence="3">Chloroplast</location>
    </subcellularLocation>
</comment>
<comment type="similarity">
    <text evidence="3">Belongs to the universal ribosomal protein uS17 family.</text>
</comment>
<accession>P17092</accession>
<gene>
    <name type="primary">RPS17</name>
</gene>